<sequence>MPPVKAPGNVSDCYFVGRVSLLKWISELLNEPVKKVEDLASGHHYCMALNLVYPGQVNMHRVRMNAINEWERSENFKIIQDVLSRNNIDKGIDVNKLVTGKYMDNFEFFQWFKWFFDQNYKGSKSGATESGSANAVTKTSKPGNRSGSTAASMQNPKASSTSGPSIDSKELEDLRRQIAKGQLESQFYFDKLHEIEIYMDQMNELMTQVEIAEPEDSPFYIKSVVKKIEDILYAEYHQ</sequence>
<name>EB1_GIAIC</name>
<keyword id="KW-0131">Cell cycle</keyword>
<keyword id="KW-0132">Cell division</keyword>
<keyword id="KW-0966">Cell projection</keyword>
<keyword id="KW-0969">Cilium</keyword>
<keyword id="KW-0963">Cytoplasm</keyword>
<keyword id="KW-0206">Cytoskeleton</keyword>
<keyword id="KW-1015">Disulfide bond</keyword>
<keyword id="KW-0282">Flagellum</keyword>
<keyword id="KW-0472">Membrane</keyword>
<keyword id="KW-0493">Microtubule</keyword>
<keyword id="KW-0498">Mitosis</keyword>
<keyword id="KW-0539">Nucleus</keyword>
<keyword id="KW-0597">Phosphoprotein</keyword>
<keyword id="KW-1185">Reference proteome</keyword>
<proteinExistence type="evidence at protein level"/>
<protein>
    <recommendedName>
        <fullName evidence="12 13 14 15 16 17">End-binding protein 1</fullName>
    </recommendedName>
    <alternativeName>
        <fullName evidence="15 16 17">GlEB1</fullName>
    </alternativeName>
    <alternativeName>
        <fullName evidence="11 12">Microtubule-associated protein EB1</fullName>
        <shortName evidence="12">MAP EB1</shortName>
    </alternativeName>
    <alternativeName>
        <fullName evidence="17 21">Microtubule-binding protein EB1</fullName>
    </alternativeName>
    <alternativeName>
        <fullName evidence="11 12 15 16 17">Plus-end tracking protein EB1</fullName>
        <shortName evidence="15 16 17">+TIP EB1</shortName>
    </alternativeName>
</protein>
<accession>E2RU10</accession>
<accession>A8BMD1</accession>
<accession>Q06Z46</accession>
<evidence type="ECO:0000255" key="1">
    <source>
        <dbReference type="PROSITE-ProRule" id="PRU00044"/>
    </source>
</evidence>
<evidence type="ECO:0000255" key="2">
    <source>
        <dbReference type="PROSITE-ProRule" id="PRU00576"/>
    </source>
</evidence>
<evidence type="ECO:0000256" key="3">
    <source>
        <dbReference type="SAM" id="MobiDB-lite"/>
    </source>
</evidence>
<evidence type="ECO:0000269" key="4">
    <source>
    </source>
</evidence>
<evidence type="ECO:0000269" key="5">
    <source>
    </source>
</evidence>
<evidence type="ECO:0000269" key="6">
    <source>
    </source>
</evidence>
<evidence type="ECO:0000269" key="7">
    <source>
    </source>
</evidence>
<evidence type="ECO:0000269" key="8">
    <source>
    </source>
</evidence>
<evidence type="ECO:0000269" key="9">
    <source>
    </source>
</evidence>
<evidence type="ECO:0000269" key="10">
    <source>
    </source>
</evidence>
<evidence type="ECO:0000303" key="11">
    <source>
    </source>
</evidence>
<evidence type="ECO:0000303" key="12">
    <source>
    </source>
</evidence>
<evidence type="ECO:0000303" key="13">
    <source>
    </source>
</evidence>
<evidence type="ECO:0000303" key="14">
    <source>
    </source>
</evidence>
<evidence type="ECO:0000303" key="15">
    <source>
    </source>
</evidence>
<evidence type="ECO:0000303" key="16">
    <source>
    </source>
</evidence>
<evidence type="ECO:0000303" key="17">
    <source>
    </source>
</evidence>
<evidence type="ECO:0000305" key="18"/>
<evidence type="ECO:0000312" key="19">
    <source>
        <dbReference type="EMBL" id="ABD60080.1"/>
    </source>
</evidence>
<evidence type="ECO:0000312" key="20">
    <source>
        <dbReference type="EMBL" id="EDO78399.1"/>
    </source>
</evidence>
<evidence type="ECO:0000312" key="21">
    <source>
        <dbReference type="EMBL" id="KAE8303993.1"/>
    </source>
</evidence>
<evidence type="ECO:0000312" key="22">
    <source>
        <dbReference type="Proteomes" id="UP000001548"/>
    </source>
</evidence>
<dbReference type="EMBL" id="DQ395240">
    <property type="protein sequence ID" value="ABD60080.1"/>
    <property type="molecule type" value="Genomic_DNA"/>
</dbReference>
<dbReference type="EMBL" id="AACB02000026">
    <property type="protein sequence ID" value="EDO78399.1"/>
    <property type="molecule type" value="Genomic_DNA"/>
</dbReference>
<dbReference type="EMBL" id="AACB03000002">
    <property type="protein sequence ID" value="KAE8303993.1"/>
    <property type="molecule type" value="Genomic_DNA"/>
</dbReference>
<dbReference type="RefSeq" id="XP_001706073.1">
    <property type="nucleotide sequence ID" value="XM_001706021.1"/>
</dbReference>
<dbReference type="SMR" id="E2RU10"/>
<dbReference type="FunCoup" id="E2RU10">
    <property type="interactions" value="97"/>
</dbReference>
<dbReference type="STRING" id="184922.E2RU10"/>
<dbReference type="iPTMnet" id="E2RU10"/>
<dbReference type="EnsemblProtists" id="EDO78399">
    <property type="protein sequence ID" value="EDO78399"/>
    <property type="gene ID" value="GL50803_14048"/>
</dbReference>
<dbReference type="GeneID" id="5698959"/>
<dbReference type="KEGG" id="gla:GL50803_0014048"/>
<dbReference type="VEuPathDB" id="GiardiaDB:DHA2_14048"/>
<dbReference type="VEuPathDB" id="GiardiaDB:GL50581_3522"/>
<dbReference type="VEuPathDB" id="GiardiaDB:GL50803_0014048"/>
<dbReference type="VEuPathDB" id="GiardiaDB:GL50803_14048"/>
<dbReference type="HOGENOM" id="CLU_041744_1_0_1"/>
<dbReference type="InParanoid" id="E2RU10"/>
<dbReference type="OMA" id="HTHWIKH"/>
<dbReference type="OrthoDB" id="2119228at2759"/>
<dbReference type="Proteomes" id="UP000001548">
    <property type="component" value="Chromosome 4"/>
</dbReference>
<dbReference type="GO" id="GO:0097729">
    <property type="term" value="C:9+2 motile cilium"/>
    <property type="evidence" value="ECO:0000314"/>
    <property type="project" value="UniProtKB"/>
</dbReference>
<dbReference type="GO" id="GO:0005930">
    <property type="term" value="C:axoneme"/>
    <property type="evidence" value="ECO:0000314"/>
    <property type="project" value="UniProtKB"/>
</dbReference>
<dbReference type="GO" id="GO:1990900">
    <property type="term" value="C:ciliary pocket collar"/>
    <property type="evidence" value="ECO:0000314"/>
    <property type="project" value="UniProtKB"/>
</dbReference>
<dbReference type="GO" id="GO:0097542">
    <property type="term" value="C:ciliary tip"/>
    <property type="evidence" value="ECO:0000314"/>
    <property type="project" value="UniProtKB"/>
</dbReference>
<dbReference type="GO" id="GO:0005737">
    <property type="term" value="C:cytoplasm"/>
    <property type="evidence" value="ECO:0000314"/>
    <property type="project" value="UniProtKB"/>
</dbReference>
<dbReference type="GO" id="GO:0005881">
    <property type="term" value="C:cytoplasmic microtubule"/>
    <property type="evidence" value="ECO:0000318"/>
    <property type="project" value="GO_Central"/>
</dbReference>
<dbReference type="GO" id="GO:0005856">
    <property type="term" value="C:cytoskeleton"/>
    <property type="evidence" value="ECO:0000314"/>
    <property type="project" value="UniProtKB"/>
</dbReference>
<dbReference type="GO" id="GO:0120135">
    <property type="term" value="C:distal portion of axoneme"/>
    <property type="evidence" value="ECO:0000314"/>
    <property type="project" value="UniProtKB"/>
</dbReference>
<dbReference type="GO" id="GO:0097568">
    <property type="term" value="C:median body"/>
    <property type="evidence" value="ECO:0000314"/>
    <property type="project" value="UniProtKB"/>
</dbReference>
<dbReference type="GO" id="GO:0005815">
    <property type="term" value="C:microtubule organizing center"/>
    <property type="evidence" value="ECO:0000318"/>
    <property type="project" value="GO_Central"/>
</dbReference>
<dbReference type="GO" id="GO:0035371">
    <property type="term" value="C:microtubule plus-end"/>
    <property type="evidence" value="ECO:0000314"/>
    <property type="project" value="UniProtKB"/>
</dbReference>
<dbReference type="GO" id="GO:0072686">
    <property type="term" value="C:mitotic spindle"/>
    <property type="evidence" value="ECO:0000314"/>
    <property type="project" value="UniProtKB"/>
</dbReference>
<dbReference type="GO" id="GO:0005635">
    <property type="term" value="C:nuclear envelope"/>
    <property type="evidence" value="ECO:0000314"/>
    <property type="project" value="UniProtKB"/>
</dbReference>
<dbReference type="GO" id="GO:0031965">
    <property type="term" value="C:nuclear membrane"/>
    <property type="evidence" value="ECO:0000314"/>
    <property type="project" value="UniProtKB"/>
</dbReference>
<dbReference type="GO" id="GO:0051233">
    <property type="term" value="C:spindle midzone"/>
    <property type="evidence" value="ECO:0000318"/>
    <property type="project" value="GO_Central"/>
</dbReference>
<dbReference type="GO" id="GO:0042802">
    <property type="term" value="F:identical protein binding"/>
    <property type="evidence" value="ECO:0000314"/>
    <property type="project" value="UniProtKB"/>
</dbReference>
<dbReference type="GO" id="GO:0051010">
    <property type="term" value="F:microtubule plus-end binding"/>
    <property type="evidence" value="ECO:0000314"/>
    <property type="project" value="UniProtKB"/>
</dbReference>
<dbReference type="GO" id="GO:0042803">
    <property type="term" value="F:protein homodimerization activity"/>
    <property type="evidence" value="ECO:0000314"/>
    <property type="project" value="UniProtKB"/>
</dbReference>
<dbReference type="GO" id="GO:0051301">
    <property type="term" value="P:cell division"/>
    <property type="evidence" value="ECO:0000315"/>
    <property type="project" value="UniProtKB"/>
</dbReference>
<dbReference type="GO" id="GO:0042073">
    <property type="term" value="P:intraciliary transport"/>
    <property type="evidence" value="ECO:0000305"/>
    <property type="project" value="UniProtKB"/>
</dbReference>
<dbReference type="GO" id="GO:0007020">
    <property type="term" value="P:microtubule nucleation"/>
    <property type="evidence" value="ECO:0000315"/>
    <property type="project" value="UniProtKB"/>
</dbReference>
<dbReference type="GO" id="GO:0000278">
    <property type="term" value="P:mitotic cell cycle"/>
    <property type="evidence" value="ECO:0000314"/>
    <property type="project" value="UniProtKB"/>
</dbReference>
<dbReference type="GO" id="GO:0000281">
    <property type="term" value="P:mitotic cytokinesis"/>
    <property type="evidence" value="ECO:0000315"/>
    <property type="project" value="UniProtKB"/>
</dbReference>
<dbReference type="GO" id="GO:0140014">
    <property type="term" value="P:mitotic nuclear division"/>
    <property type="evidence" value="ECO:0000316"/>
    <property type="project" value="UniProtKB"/>
</dbReference>
<dbReference type="GO" id="GO:0035372">
    <property type="term" value="P:protein localization to microtubule"/>
    <property type="evidence" value="ECO:0000314"/>
    <property type="project" value="UniProtKB"/>
</dbReference>
<dbReference type="GO" id="GO:0070507">
    <property type="term" value="P:regulation of microtubule cytoskeleton organization"/>
    <property type="evidence" value="ECO:0000315"/>
    <property type="project" value="UniProtKB"/>
</dbReference>
<dbReference type="GO" id="GO:0031110">
    <property type="term" value="P:regulation of microtubule polymerization or depolymerization"/>
    <property type="evidence" value="ECO:0000318"/>
    <property type="project" value="GO_Central"/>
</dbReference>
<dbReference type="GO" id="GO:0051225">
    <property type="term" value="P:spindle assembly"/>
    <property type="evidence" value="ECO:0000318"/>
    <property type="project" value="GO_Central"/>
</dbReference>
<dbReference type="FunFam" id="1.20.5.1430:FF:000014">
    <property type="entry name" value="EB1"/>
    <property type="match status" value="1"/>
</dbReference>
<dbReference type="FunFam" id="1.10.418.10:FF:000028">
    <property type="entry name" value="RP/EB family microtubule-associated protein"/>
    <property type="match status" value="1"/>
</dbReference>
<dbReference type="Gene3D" id="1.20.5.1430">
    <property type="match status" value="1"/>
</dbReference>
<dbReference type="Gene3D" id="1.10.418.10">
    <property type="entry name" value="Calponin-like domain"/>
    <property type="match status" value="1"/>
</dbReference>
<dbReference type="InterPro" id="IPR001715">
    <property type="entry name" value="CH_dom"/>
</dbReference>
<dbReference type="InterPro" id="IPR036872">
    <property type="entry name" value="CH_dom_sf"/>
</dbReference>
<dbReference type="InterPro" id="IPR004953">
    <property type="entry name" value="EB1_C"/>
</dbReference>
<dbReference type="InterPro" id="IPR036133">
    <property type="entry name" value="EB1_C_sf"/>
</dbReference>
<dbReference type="InterPro" id="IPR027328">
    <property type="entry name" value="MAPRE"/>
</dbReference>
<dbReference type="PANTHER" id="PTHR10623">
    <property type="entry name" value="MICROTUBULE-ASSOCIATED PROTEIN RP/EB FAMILY MEMBER"/>
    <property type="match status" value="1"/>
</dbReference>
<dbReference type="Pfam" id="PF00307">
    <property type="entry name" value="CH"/>
    <property type="match status" value="1"/>
</dbReference>
<dbReference type="Pfam" id="PF03271">
    <property type="entry name" value="EB1"/>
    <property type="match status" value="1"/>
</dbReference>
<dbReference type="SUPFAM" id="SSF47576">
    <property type="entry name" value="Calponin-homology domain, CH-domain"/>
    <property type="match status" value="1"/>
</dbReference>
<dbReference type="SUPFAM" id="SSF140612">
    <property type="entry name" value="EB1 dimerisation domain-like"/>
    <property type="match status" value="1"/>
</dbReference>
<dbReference type="PROSITE" id="PS50021">
    <property type="entry name" value="CH"/>
    <property type="match status" value="1"/>
</dbReference>
<dbReference type="PROSITE" id="PS51230">
    <property type="entry name" value="EB1_C"/>
    <property type="match status" value="1"/>
</dbReference>
<reference evidence="19" key="1">
    <citation type="journal article" date="2007" name="Eukaryot. Cell">
        <title>Kinesin-13 regulates flagellar, interphase, and mitotic microtubule dynamics in Giardia intestinalis.</title>
        <authorList>
            <person name="Dawson S.C."/>
            <person name="Sagolla M.S."/>
            <person name="Mancuso J.J."/>
            <person name="Woessner D.J."/>
            <person name="House S.A."/>
            <person name="Fritz-Laylin L."/>
            <person name="Cande W.Z."/>
        </authorList>
    </citation>
    <scope>NUCLEOTIDE SEQUENCE [GENOMIC DNA]</scope>
    <scope>FUNCTION</scope>
    <scope>SUBCELLULAR LOCATION</scope>
    <source>
        <strain evidence="11">ATCC 50803 / WB clone C6</strain>
    </source>
</reference>
<reference evidence="20 22" key="2">
    <citation type="journal article" date="2007" name="Science">
        <title>Genomic minimalism in the early diverging intestinal parasite Giardia lamblia.</title>
        <authorList>
            <person name="Morrison H.G."/>
            <person name="McArthur A.G."/>
            <person name="Gillin F.D."/>
            <person name="Aley S.B."/>
            <person name="Adam R.D."/>
            <person name="Olsen G.J."/>
            <person name="Best A.A."/>
            <person name="Cande W.Z."/>
            <person name="Chen F."/>
            <person name="Cipriano M.J."/>
            <person name="Davids B.J."/>
            <person name="Dawson S.C."/>
            <person name="Elmendorf H.G."/>
            <person name="Hehl A.B."/>
            <person name="Holder M.E."/>
            <person name="Huse S.M."/>
            <person name="Kim U.U."/>
            <person name="Lasek-Nesselquist E."/>
            <person name="Manning G."/>
            <person name="Nigam A."/>
            <person name="Nixon J.E.J."/>
            <person name="Palm D."/>
            <person name="Passamaneck N.E."/>
            <person name="Prabhu A."/>
            <person name="Reich C.I."/>
            <person name="Reiner D.S."/>
            <person name="Samuelson J."/>
            <person name="Svard S.G."/>
            <person name="Sogin M.L."/>
        </authorList>
    </citation>
    <scope>NUCLEOTIDE SEQUENCE [LARGE SCALE GENOMIC DNA]</scope>
    <source>
        <strain evidence="22">ATCC 50803 / WB clone C6</strain>
    </source>
</reference>
<reference evidence="21" key="3">
    <citation type="submission" date="2019-07" db="EMBL/GenBank/DDBJ databases">
        <title>New Giardia intestinalis WB genome in near-complete chromosomes.</title>
        <authorList>
            <person name="Xu F."/>
            <person name="Jex A."/>
            <person name="Svard S.G."/>
        </authorList>
    </citation>
    <scope>NUCLEOTIDE SEQUENCE [LARGE SCALE GENOMIC DNA]</scope>
    <source>
        <strain evidence="21">ATCC 50803 / WB clone C6</strain>
    </source>
</reference>
<reference key="4">
    <citation type="journal article" date="2008" name="Parasitol. Int.">
        <title>Giardia lamblia EB1 is a functional homolog of yeast Bim1p that binds to microtubules.</title>
        <authorList>
            <person name="Kim J."/>
            <person name="Sim S."/>
            <person name="Kim J."/>
            <person name="Song K."/>
            <person name="Yong T.S."/>
            <person name="Park S.J."/>
        </authorList>
    </citation>
    <scope>FUNCTION</scope>
    <scope>SUBCELLULAR LOCATION</scope>
    <scope>INDUCTION</scope>
    <source>
        <strain evidence="12">ATCC 30957 / WB</strain>
    </source>
</reference>
<reference key="5">
    <citation type="journal article" date="2008" name="Parasitol. Res.">
        <title>Interaction of BOP1, a protein for ribosome biogenesis, with EB1 in Giardia lamblia.</title>
        <authorList>
            <person name="Kim J."/>
            <person name="Sim S."/>
            <person name="Yong T.S."/>
            <person name="Park S.J."/>
        </authorList>
    </citation>
    <scope>INTERACTION WITH BOP1</scope>
    <source>
        <strain evidence="13">ATCC 30957 / WB</strain>
    </source>
</reference>
<reference key="6">
    <citation type="journal article" date="2010" name="Parasitol. Res.">
        <title>Identification of end-binding 1 (EB1) interacting proteins in Giardia lamblia.</title>
        <authorList>
            <person name="Kang K."/>
            <person name="Kim J."/>
            <person name="Yong T.S."/>
            <person name="Park S.J."/>
        </authorList>
    </citation>
    <scope>INTERACTION WITH GIARDIN SUBUNIT GAMMA; NEUROGENIC LOCUS NOTCH HOMOLOG PROTEIN; GL50803_8358 AND GL50803_11327</scope>
    <scope>SUBCELLULAR LOCATION</scope>
    <source>
        <strain evidence="14">ATCC 30957 / WB</strain>
    </source>
</reference>
<reference key="7">
    <citation type="journal article" date="2014" name="PLoS ONE">
        <title>Characterization of microtubule-binding and dimerization activity of Giardia lamblia end-binding 1 protein.</title>
        <authorList>
            <person name="Kim J."/>
            <person name="Nagami S."/>
            <person name="Lee K.H."/>
            <person name="Park S.J."/>
        </authorList>
    </citation>
    <scope>FUNCTION</scope>
    <scope>SUBUNIT</scope>
    <scope>SUBCELLULAR LOCATION</scope>
    <scope>INDUCTION</scope>
    <scope>DOMAIN</scope>
    <scope>DISRUPTION PHENOTYPE</scope>
    <scope>DISULFIDE BOND</scope>
    <scope>MUTAGENESIS OF 1-MET--LYS-101; CYS-13; CYS-46 AND 185-SER--GLN-238</scope>
    <source>
        <strain evidence="15">ATCC 30957 / WB</strain>
    </source>
</reference>
<reference key="8">
    <citation type="journal article" date="2017" name="J. Eukaryot. Microbiol.">
        <title>Phosphorylation of Serine 148 in Giardia lamblia End-binding 1 Protein is Important for Cell Division.</title>
        <authorList>
            <person name="Kim J."/>
            <person name="Lee H.Y."/>
            <person name="Lee K.H."/>
            <person name="Park S.J."/>
        </authorList>
    </citation>
    <scope>FUNCTION</scope>
    <scope>INTERACTION WITH AURORA KINASE</scope>
    <scope>SUBCELLULAR LOCATION</scope>
    <scope>PTM</scope>
    <scope>REGION</scope>
    <scope>PHOSPHORYLATION AT SER-148</scope>
    <scope>MUTAGENESIS OF SER-20; SER-123; SER-125; SER-130; SER-132; SER-140; SER-146; SER-148; SER-152; SER-159; SER-160; SER-162; SER-165 AND SER-168</scope>
    <source>
        <strain evidence="16">ATCC 30957 / WB</strain>
    </source>
</reference>
<reference key="9">
    <citation type="journal article" date="2019" name="MicrobiologyOpen">
        <title>Roles of end-binding 1 protein and gamma-tubulin small complex in cytokinesis and flagella formation of Giardia lamblia.</title>
        <authorList>
            <person name="Kim J."/>
            <person name="Park S.J."/>
        </authorList>
    </citation>
    <scope>FUNCTION</scope>
    <scope>INTERACTION WITH TUBULIN GAMMA CHAIN</scope>
    <scope>SUBCELLULAR LOCATION</scope>
    <scope>DISRUPTION PHENOTYPE</scope>
    <source>
        <strain evidence="17">ATCC 30957 / WB</strain>
    </source>
</reference>
<organism evidence="20">
    <name type="scientific">Giardia intestinalis (strain ATCC 50803 / WB clone C6)</name>
    <name type="common">Giardia lamblia</name>
    <dbReference type="NCBI Taxonomy" id="184922"/>
    <lineage>
        <taxon>Eukaryota</taxon>
        <taxon>Metamonada</taxon>
        <taxon>Diplomonadida</taxon>
        <taxon>Hexamitidae</taxon>
        <taxon>Giardiinae</taxon>
        <taxon>Giardia</taxon>
    </lineage>
</organism>
<feature type="chain" id="PRO_0000459110" description="End-binding protein 1">
    <location>
        <begin position="1"/>
        <end position="238"/>
    </location>
</feature>
<feature type="domain" description="Calponin-homology (CH)" evidence="1">
    <location>
        <begin position="15"/>
        <end position="117"/>
    </location>
</feature>
<feature type="domain" description="EB1 C-terminal" evidence="2">
    <location>
        <begin position="156"/>
        <end position="238"/>
    </location>
</feature>
<feature type="region of interest" description="Interaction with aurora kinase" evidence="9">
    <location>
        <begin position="101"/>
        <end position="238"/>
    </location>
</feature>
<feature type="region of interest" description="Disordered" evidence="3">
    <location>
        <begin position="124"/>
        <end position="169"/>
    </location>
</feature>
<feature type="compositionally biased region" description="Polar residues" evidence="3">
    <location>
        <begin position="124"/>
        <end position="165"/>
    </location>
</feature>
<feature type="modified residue" description="Phosphoserine" evidence="9">
    <location>
        <position position="148"/>
    </location>
</feature>
<feature type="disulfide bond" description="Interchain; associated with mitosis" evidence="8">
    <location>
        <position position="13"/>
    </location>
</feature>
<feature type="mutagenesis site" description="Retains ability to bind microtubules (MTs). Tends to form multimers." evidence="8">
    <location>
        <begin position="1"/>
        <end position="101"/>
    </location>
</feature>
<feature type="mutagenesis site" description="Not able to rescue a mitotic defect of the S.cerevisiae BIM1 knockout mutant in a complementation assay. Homodimer in the presence or absence of dithiothreitol (DTT)." evidence="8">
    <original>C</original>
    <variation>S</variation>
    <location>
        <position position="13"/>
    </location>
</feature>
<feature type="mutagenesis site" description="No effect on phosphorylation." evidence="9">
    <original>S</original>
    <variation>A</variation>
    <location>
        <position position="20"/>
    </location>
</feature>
<feature type="mutagenesis site" description="Homodimer in the absence of dithiothreitol (DTT)." evidence="8">
    <original>C</original>
    <variation>S</variation>
    <location>
        <position position="46"/>
    </location>
</feature>
<feature type="mutagenesis site" description="No effect on phosphorylation." evidence="9">
    <original>S</original>
    <variation>A</variation>
    <location>
        <position position="123"/>
    </location>
</feature>
<feature type="mutagenesis site" description="No effect on phosphorylation." evidence="9">
    <original>S</original>
    <variation>A</variation>
    <location>
        <position position="125"/>
    </location>
</feature>
<feature type="mutagenesis site" description="No effect on phosphorylation." evidence="9">
    <original>S</original>
    <variation>A</variation>
    <location>
        <position position="130"/>
    </location>
</feature>
<feature type="mutagenesis site" description="No effect on phosphorylation." evidence="9">
    <original>S</original>
    <variation>A</variation>
    <location>
        <position position="132"/>
    </location>
</feature>
<feature type="mutagenesis site" description="No effect on phosphorylation." evidence="9">
    <original>S</original>
    <variation>A</variation>
    <location>
        <position position="140"/>
    </location>
</feature>
<feature type="mutagenesis site" description="No effect on phosphorylation." evidence="9">
    <original>S</original>
    <variation>A</variation>
    <location>
        <position position="146"/>
    </location>
</feature>
<feature type="mutagenesis site" description="Loss of phosphorylation. Decreased growth. Decreased number of cells in interphase. Increased number of cells arrested at cytokinesis." evidence="9">
    <original>S</original>
    <variation>A</variation>
    <location>
        <position position="148"/>
    </location>
</feature>
<feature type="mutagenesis site" description="Mimics phosphorylated form of the protein rescuing cytokinesis defects caused by the inhibitor of aurora kinase." evidence="9">
    <original>S</original>
    <variation>D</variation>
    <location>
        <position position="148"/>
    </location>
</feature>
<feature type="mutagenesis site" description="No effect on phosphorylation." evidence="9">
    <original>S</original>
    <variation>A</variation>
    <location>
        <position position="152"/>
    </location>
</feature>
<feature type="mutagenesis site" description="No effect on phosphorylation." evidence="9">
    <original>S</original>
    <variation>A</variation>
    <location>
        <position position="159"/>
    </location>
</feature>
<feature type="mutagenesis site" description="No effect on phosphorylation." evidence="9">
    <original>S</original>
    <variation>A</variation>
    <location>
        <position position="160"/>
    </location>
</feature>
<feature type="mutagenesis site" description="No effect on phosphorylation." evidence="9">
    <original>S</original>
    <variation>A</variation>
    <location>
        <position position="162"/>
    </location>
</feature>
<feature type="mutagenesis site" description="No effect on phosphorylation." evidence="9">
    <original>S</original>
    <variation>A</variation>
    <location>
        <position position="165"/>
    </location>
</feature>
<feature type="mutagenesis site" description="No effect on phosphorylation." evidence="9">
    <original>S</original>
    <variation>A</variation>
    <location>
        <position position="168"/>
    </location>
</feature>
<feature type="mutagenesis site" description="Loss of ability to bind microtubules (MTs). Able to homodimerize in the absence of dithiothreitol (DTT), but not in the presence of DTT." evidence="8">
    <location>
        <begin position="185"/>
        <end position="238"/>
    </location>
</feature>
<gene>
    <name evidence="19" type="primary">EB1</name>
    <name evidence="21" type="ORF">GL50803_0014048</name>
    <name evidence="20" type="ORF">GL50803_14048</name>
</gene>
<comment type="function">
    <text evidence="4 5 8 9 10">Involved in cell division (PubMed:18590831, PubMed:24828878, PubMed:27859890). Involved in mitosis (PubMed:18590831, PubMed:24828878). Regulates dynamics of microtubules (MTs) during mitosis (PubMed:24828878). Required for cytokinesis (PubMed:27859890). Binds polymerized MTs in vitro (PubMed:18590831, PubMed:24828878). Is able to rescue a mitotic division defect, the proper positioning of the nucleus, of the S.cerevisiae BIM1 knockout mutant in a complementation assay (PubMed:18590831, PubMed:24828878). May play a role in spindle positioning and MT distribution (PubMed:18590831). May be involved in MT nucleation for the formation of median bodies and in the biogenesis of flagella (PubMed:30318753). Based on its localization to both the flagellar exit point and the distal flagellar tips, it may mediate the transition from anterograde to retrograde intraflagellar transport (IFT) (PubMed:17766466).</text>
</comment>
<comment type="subunit">
    <text evidence="6 7 8 9 10">Homodimer; disulfide-linked and via interaction of the C-terminal EB1-specific domains (PubMed:24828878). Interacts with BOP1 (via C-terminal WD repeats) (PubMed:18670790). Interacts with giardin subunit gamma, neurogenic locus notch homolog protein, GL50803_8358 and GL50803_11327 (PubMed:19953272). Interacts (via C-terminal residues 101-238) with aurora kinase (PubMed:27859890). Interacts with tubulin gamma chain (PubMed:30318753).</text>
</comment>
<comment type="subcellular location">
    <subcellularLocation>
        <location evidence="5 7 8 9 10">Nucleus membrane</location>
    </subcellularLocation>
    <subcellularLocation>
        <location evidence="4 5 7 8 9 10">Cytoplasm</location>
        <location evidence="4 5 7 8 9 10">Cytoskeleton</location>
    </subcellularLocation>
    <subcellularLocation>
        <location evidence="4 8 9">Cytoplasm</location>
        <location evidence="4 8 9">Cytoskeleton</location>
        <location evidence="4 8 9">Spindle</location>
    </subcellularLocation>
    <subcellularLocation>
        <location evidence="8">Nucleus envelope</location>
    </subcellularLocation>
    <subcellularLocation>
        <location evidence="4 5 7">Cytoplasm</location>
        <location evidence="4 5 7">Cytoskeleton</location>
        <location evidence="4 5 7">Flagellum axoneme</location>
    </subcellularLocation>
    <subcellularLocation>
        <location evidence="4">Cell projection</location>
        <location evidence="4">Cilium</location>
        <location evidence="4">Flagellum</location>
    </subcellularLocation>
    <subcellularLocation>
        <location evidence="8">Cytoplasm</location>
    </subcellularLocation>
    <text evidence="4 5 7 8 9">Localizes to the plus ends of mitotic and interphase microtubules (PubMed:17766466). Localizes to the eight flagellar tips, the median body and the mitotic spindles (PubMed:17766466). Localizes particularly at the distal tips of axonemes and axonemal exit points (flagellar pores) (PubMed:17766466). Localizes to nuclear membranes and median bodies in trophozoites (PubMed:18590831, PubMed:19953272, PubMed:24828878). Localizes to axonemes between the two nuclei in trophozoites (PubMed:18590831, PubMed:19953272). Localizes to the mitotic spindles of the dividing trophozoites at anaphase (PubMed:24828878). Localizes mainly to the nuclear membranes 24 hours after induction of encystation and to median bodies in some of the encysting cells (PubMed:24828878). Dispersed in a condensed pattern in the cytoplasm of the cysts, but absent from the nuclear membranes, 48 hours after induction of encystation (PubMed:24828878). Colocalizes with aurora kinase at the nuclear membrane and the median bodies in interphase, at the spindle microtubules surrounding the chromosomes in metaphase, at the mitotic spindles in anaphase and telophase, and at the nuclear membranes in cytokinesis (PubMed:27859890). Does not localize to the median body during cell division (PubMed:27859890). Does not localize to ventral disk (PubMed:17766466).</text>
</comment>
<comment type="induction">
    <text evidence="5 8">Expression remains constant throughout the cell cycle (at protein level) (PubMed:24828878). Expression remains constant in trophozoites and in encysting cells (at protein level) (PubMed:18590831).</text>
</comment>
<comment type="domain">
    <text evidence="8">Interaction between the C-terminal EB1-specific domains of two protein monomers is sufficient for homodimerization.</text>
</comment>
<comment type="PTM">
    <text evidence="9">Phosphorylated in vitro by aurora kinase. Phosphorylation is important for cell division.</text>
</comment>
<comment type="disruption phenotype">
    <text evidence="8 10">Knockdown of expression by morpholino has serious defect in mitosis of the trophozoites (PubMed:24828878). Knockdown barely localizes to the nuclear membranes and localizes to the median bodies at a lower level than in wild-type cells (PubMed:24828878). Knockdown has increased number of cells with four nuclei (PubMed:24828878). Knockdown results in reduced formation and volume of the median bodies (PubMed:30318753). Knockdown has increased number of posterolateral and ventral axonemes without central pair of flagellar microtubules (MTs) and slightly reduced length of the caudal flagella (PubMed:30318753). Knockdown does not affect central pair of flagellar MTs in anterior and caudal axonemes (PubMed:30318753).</text>
</comment>
<comment type="similarity">
    <text evidence="18">Belongs to the MAPRE family.</text>
</comment>